<name>RL32_TROWT</name>
<dbReference type="EMBL" id="AE014184">
    <property type="protein sequence ID" value="AAO44660.1"/>
    <property type="molecule type" value="Genomic_DNA"/>
</dbReference>
<dbReference type="RefSeq" id="WP_011096156.1">
    <property type="nucleotide sequence ID" value="NC_004572.3"/>
</dbReference>
<dbReference type="STRING" id="203267.TWT_563"/>
<dbReference type="GeneID" id="67387974"/>
<dbReference type="KEGG" id="twh:TWT_563"/>
<dbReference type="eggNOG" id="COG0333">
    <property type="taxonomic scope" value="Bacteria"/>
</dbReference>
<dbReference type="HOGENOM" id="CLU_2805252_0_0_11"/>
<dbReference type="OrthoDB" id="9807363at2"/>
<dbReference type="Proteomes" id="UP000002200">
    <property type="component" value="Chromosome"/>
</dbReference>
<dbReference type="GO" id="GO:0015934">
    <property type="term" value="C:large ribosomal subunit"/>
    <property type="evidence" value="ECO:0007669"/>
    <property type="project" value="InterPro"/>
</dbReference>
<dbReference type="GO" id="GO:0003735">
    <property type="term" value="F:structural constituent of ribosome"/>
    <property type="evidence" value="ECO:0007669"/>
    <property type="project" value="InterPro"/>
</dbReference>
<dbReference type="GO" id="GO:0006412">
    <property type="term" value="P:translation"/>
    <property type="evidence" value="ECO:0007669"/>
    <property type="project" value="UniProtKB-UniRule"/>
</dbReference>
<dbReference type="HAMAP" id="MF_00340">
    <property type="entry name" value="Ribosomal_bL32"/>
    <property type="match status" value="1"/>
</dbReference>
<dbReference type="InterPro" id="IPR002677">
    <property type="entry name" value="Ribosomal_bL32"/>
</dbReference>
<dbReference type="InterPro" id="IPR011332">
    <property type="entry name" value="Ribosomal_zn-bd"/>
</dbReference>
<dbReference type="NCBIfam" id="TIGR01031">
    <property type="entry name" value="rpmF_bact"/>
    <property type="match status" value="1"/>
</dbReference>
<dbReference type="Pfam" id="PF01783">
    <property type="entry name" value="Ribosomal_L32p"/>
    <property type="match status" value="1"/>
</dbReference>
<dbReference type="SUPFAM" id="SSF57829">
    <property type="entry name" value="Zn-binding ribosomal proteins"/>
    <property type="match status" value="1"/>
</dbReference>
<proteinExistence type="inferred from homology"/>
<evidence type="ECO:0000255" key="1">
    <source>
        <dbReference type="HAMAP-Rule" id="MF_00340"/>
    </source>
</evidence>
<evidence type="ECO:0000305" key="2"/>
<sequence length="65" mass="7657">MAVPKRKKSRANTRARRSQWKASVPGFARLEERGRPVFYLPHRARRILDSNGNELFMEYKGRRVG</sequence>
<protein>
    <recommendedName>
        <fullName evidence="1">Large ribosomal subunit protein bL32</fullName>
    </recommendedName>
    <alternativeName>
        <fullName evidence="2">50S ribosomal protein L32</fullName>
    </alternativeName>
</protein>
<gene>
    <name evidence="1" type="primary">rpmF</name>
    <name type="ordered locus">TWT_563</name>
</gene>
<accession>Q83FY1</accession>
<comment type="similarity">
    <text evidence="1">Belongs to the bacterial ribosomal protein bL32 family.</text>
</comment>
<reference key="1">
    <citation type="journal article" date="2003" name="Genome Res.">
        <title>Tropheryma whipplei twist: a human pathogenic Actinobacteria with a reduced genome.</title>
        <authorList>
            <person name="Raoult D."/>
            <person name="Ogata H."/>
            <person name="Audic S."/>
            <person name="Robert C."/>
            <person name="Suhre K."/>
            <person name="Drancourt M."/>
            <person name="Claverie J.-M."/>
        </authorList>
    </citation>
    <scope>NUCLEOTIDE SEQUENCE [LARGE SCALE GENOMIC DNA]</scope>
    <source>
        <strain>Twist</strain>
    </source>
</reference>
<organism>
    <name type="scientific">Tropheryma whipplei (strain Twist)</name>
    <name type="common">Whipple's bacillus</name>
    <dbReference type="NCBI Taxonomy" id="203267"/>
    <lineage>
        <taxon>Bacteria</taxon>
        <taxon>Bacillati</taxon>
        <taxon>Actinomycetota</taxon>
        <taxon>Actinomycetes</taxon>
        <taxon>Micrococcales</taxon>
        <taxon>Tropherymataceae</taxon>
        <taxon>Tropheryma</taxon>
    </lineage>
</organism>
<keyword id="KW-1185">Reference proteome</keyword>
<keyword id="KW-0687">Ribonucleoprotein</keyword>
<keyword id="KW-0689">Ribosomal protein</keyword>
<feature type="chain" id="PRO_0000172431" description="Large ribosomal subunit protein bL32">
    <location>
        <begin position="1"/>
        <end position="65"/>
    </location>
</feature>